<accession>C0JAS1</accession>
<protein>
    <recommendedName>
        <fullName evidence="6">Dermonecrotic toxin LhSicTox-alphaIA2biii</fullName>
        <ecNumber evidence="4">4.6.1.-</ecNumber>
    </recommendedName>
    <alternativeName>
        <fullName>Phospholipase D</fullName>
        <shortName>PLD</shortName>
    </alternativeName>
    <alternativeName>
        <fullName>Sphingomyelin phosphodiesterase D</fullName>
        <shortName>SMD</shortName>
        <shortName>SMase D</shortName>
        <shortName>Sphingomyelinase D</shortName>
    </alternativeName>
</protein>
<proteinExistence type="evidence at transcript level"/>
<comment type="function">
    <text evidence="1 3">Dermonecrotic toxins cleave the phosphodiester linkage between the phosphate and headgroup of certain phospholipids (sphingolipid and lysolipid substrates), forming an alcohol (often choline) and a cyclic phosphate (By similarity). This toxin acts on sphingomyelin (SM) (By similarity). It may also act on ceramide phosphoethanolamine (CPE), lysophosphatidylcholine (LPC) and lysophosphatidylethanolamine (LPE), but not on lysophosphatidylserine (LPS), and lysophosphatidylglycerol (LPG) (By similarity). It acts by transphosphatidylation, releasing exclusively cyclic phosphate products as second products (By similarity). Induces dermonecrosis, hemolysis, increased vascular permeability, edema, inflammatory response, and platelet aggregation (By similarity).</text>
</comment>
<comment type="catalytic activity">
    <reaction evidence="1">
        <text>an N-(acyl)-sphingosylphosphocholine = an N-(acyl)-sphingosyl-1,3-cyclic phosphate + choline</text>
        <dbReference type="Rhea" id="RHEA:60652"/>
        <dbReference type="ChEBI" id="CHEBI:15354"/>
        <dbReference type="ChEBI" id="CHEBI:64583"/>
        <dbReference type="ChEBI" id="CHEBI:143892"/>
    </reaction>
</comment>
<comment type="catalytic activity">
    <reaction evidence="1">
        <text>an N-(acyl)-sphingosylphosphoethanolamine = an N-(acyl)-sphingosyl-1,3-cyclic phosphate + ethanolamine</text>
        <dbReference type="Rhea" id="RHEA:60648"/>
        <dbReference type="ChEBI" id="CHEBI:57603"/>
        <dbReference type="ChEBI" id="CHEBI:143891"/>
        <dbReference type="ChEBI" id="CHEBI:143892"/>
    </reaction>
</comment>
<comment type="catalytic activity">
    <reaction evidence="1">
        <text>a 1-acyl-sn-glycero-3-phosphocholine = a 1-acyl-sn-glycero-2,3-cyclic phosphate + choline</text>
        <dbReference type="Rhea" id="RHEA:60700"/>
        <dbReference type="ChEBI" id="CHEBI:15354"/>
        <dbReference type="ChEBI" id="CHEBI:58168"/>
        <dbReference type="ChEBI" id="CHEBI:143947"/>
    </reaction>
</comment>
<comment type="catalytic activity">
    <reaction evidence="1">
        <text>a 1-acyl-sn-glycero-3-phosphoethanolamine = a 1-acyl-sn-glycero-2,3-cyclic phosphate + ethanolamine</text>
        <dbReference type="Rhea" id="RHEA:60704"/>
        <dbReference type="ChEBI" id="CHEBI:57603"/>
        <dbReference type="ChEBI" id="CHEBI:64381"/>
        <dbReference type="ChEBI" id="CHEBI:143947"/>
    </reaction>
</comment>
<comment type="cofactor">
    <cofactor evidence="5">
        <name>Mg(2+)</name>
        <dbReference type="ChEBI" id="CHEBI:18420"/>
    </cofactor>
    <text evidence="5">Binds 1 Mg(2+) ion per subunit.</text>
</comment>
<comment type="subcellular location">
    <subcellularLocation>
        <location evidence="8">Secreted</location>
    </subcellularLocation>
</comment>
<comment type="tissue specificity">
    <text evidence="8">Expressed by the venom gland.</text>
</comment>
<comment type="similarity">
    <text evidence="7">Belongs to the arthropod phospholipase D family. Class II subfamily.</text>
</comment>
<comment type="caution">
    <text evidence="1 2 4">The most common activity assay for dermonecrotic toxins detects enzymatic activity by monitoring choline release from substrate. Liberation of choline from sphingomyelin (SM) or lysophosphatidylcholine (LPC) is commonly assumed to result from substrate hydrolysis, giving either ceramide-1-phosphate (C1P) or lysophosphatidic acid (LPA), respectively, as a second product. However, two studies from Lajoie and colleagues (2013 and 2015) report the observation of exclusive formation of cyclic phosphate products as second products, resulting from intramolecular transphosphatidylation. Cyclic phosphates have vastly different biological properties from their monoester counterparts, and they may be relevant to the pathology of brown spider envenomation.</text>
</comment>
<sequence>WIMGHMVNAIYQIDEFVNLGANSIETDVSFDDNANPEYTYHGIPCDCGRSCLKWENYNDFLKGLRSATTPGNSKYQSKLILVVFDLKTGSLYDNQASEAGKKLAKNLLKHYWNNGNNGGRAYIVLSIPDLNHYPLIKGFTDTLKQEGHPELLEKVGYDFSGNDAIGDVAKAYKKAGVSGHVWQSDGITNCLLRGLSRVKDAVANRDSGKGYINKVYYWTVDKRATTRDALDAGVDGVMTNYPDVIADVMNEAAYKSKVRLATYEDSPWVTFKK</sequence>
<organism>
    <name type="scientific">Loxosceles hirsuta</name>
    <name type="common">Recluse spider</name>
    <dbReference type="NCBI Taxonomy" id="571525"/>
    <lineage>
        <taxon>Eukaryota</taxon>
        <taxon>Metazoa</taxon>
        <taxon>Ecdysozoa</taxon>
        <taxon>Arthropoda</taxon>
        <taxon>Chelicerata</taxon>
        <taxon>Arachnida</taxon>
        <taxon>Araneae</taxon>
        <taxon>Araneomorphae</taxon>
        <taxon>Haplogynae</taxon>
        <taxon>Scytodoidea</taxon>
        <taxon>Sicariidae</taxon>
        <taxon>Loxosceles</taxon>
    </lineage>
</organism>
<dbReference type="EC" id="4.6.1.-" evidence="4"/>
<dbReference type="EMBL" id="FJ171356">
    <property type="protein sequence ID" value="ACN48852.1"/>
    <property type="molecule type" value="mRNA"/>
</dbReference>
<dbReference type="SMR" id="C0JAS1"/>
<dbReference type="GO" id="GO:0005576">
    <property type="term" value="C:extracellular region"/>
    <property type="evidence" value="ECO:0007669"/>
    <property type="project" value="UniProtKB-SubCell"/>
</dbReference>
<dbReference type="GO" id="GO:0016829">
    <property type="term" value="F:lyase activity"/>
    <property type="evidence" value="ECO:0007669"/>
    <property type="project" value="UniProtKB-KW"/>
</dbReference>
<dbReference type="GO" id="GO:0046872">
    <property type="term" value="F:metal ion binding"/>
    <property type="evidence" value="ECO:0007669"/>
    <property type="project" value="UniProtKB-KW"/>
</dbReference>
<dbReference type="GO" id="GO:0008081">
    <property type="term" value="F:phosphoric diester hydrolase activity"/>
    <property type="evidence" value="ECO:0007669"/>
    <property type="project" value="InterPro"/>
</dbReference>
<dbReference type="GO" id="GO:0090729">
    <property type="term" value="F:toxin activity"/>
    <property type="evidence" value="ECO:0007669"/>
    <property type="project" value="UniProtKB-KW"/>
</dbReference>
<dbReference type="GO" id="GO:0031640">
    <property type="term" value="P:killing of cells of another organism"/>
    <property type="evidence" value="ECO:0007669"/>
    <property type="project" value="UniProtKB-KW"/>
</dbReference>
<dbReference type="GO" id="GO:0016042">
    <property type="term" value="P:lipid catabolic process"/>
    <property type="evidence" value="ECO:0007669"/>
    <property type="project" value="UniProtKB-KW"/>
</dbReference>
<dbReference type="CDD" id="cd08576">
    <property type="entry name" value="GDPD_like_SMaseD_PLD"/>
    <property type="match status" value="1"/>
</dbReference>
<dbReference type="Gene3D" id="3.20.20.190">
    <property type="entry name" value="Phosphatidylinositol (PI) phosphodiesterase"/>
    <property type="match status" value="1"/>
</dbReference>
<dbReference type="InterPro" id="IPR017946">
    <property type="entry name" value="PLC-like_Pdiesterase_TIM-brl"/>
</dbReference>
<dbReference type="Pfam" id="PF13653">
    <property type="entry name" value="GDPD_2"/>
    <property type="match status" value="1"/>
</dbReference>
<dbReference type="SUPFAM" id="SSF51695">
    <property type="entry name" value="PLC-like phosphodiesterases"/>
    <property type="match status" value="1"/>
</dbReference>
<name>A1IB3_LOXHI</name>
<reference key="1">
    <citation type="journal article" date="2009" name="Mol. Biol. Evol.">
        <title>Molecular evolution, functional variation, and proposed nomenclature of the gene family that includes sphingomyelinase D in sicariid spider venoms.</title>
        <authorList>
            <person name="Binford G.J."/>
            <person name="Bodner M.R."/>
            <person name="Cordes M.H."/>
            <person name="Baldwin K.L."/>
            <person name="Rynerson M.R."/>
            <person name="Burns S.N."/>
            <person name="Zobel-Thropp P.A."/>
        </authorList>
    </citation>
    <scope>NUCLEOTIDE SEQUENCE [MRNA]</scope>
    <scope>NOMENCLATURE</scope>
    <source>
        <tissue>Venom gland</tissue>
    </source>
</reference>
<evidence type="ECO:0000250" key="1">
    <source>
        <dbReference type="UniProtKB" id="A0A0D4WTV1"/>
    </source>
</evidence>
<evidence type="ECO:0000250" key="2">
    <source>
        <dbReference type="UniProtKB" id="A0A0D4WV12"/>
    </source>
</evidence>
<evidence type="ECO:0000250" key="3">
    <source>
        <dbReference type="UniProtKB" id="P0CE80"/>
    </source>
</evidence>
<evidence type="ECO:0000250" key="4">
    <source>
        <dbReference type="UniProtKB" id="Q4ZFU2"/>
    </source>
</evidence>
<evidence type="ECO:0000250" key="5">
    <source>
        <dbReference type="UniProtKB" id="Q8I914"/>
    </source>
</evidence>
<evidence type="ECO:0000303" key="6">
    <source>
    </source>
</evidence>
<evidence type="ECO:0000305" key="7"/>
<evidence type="ECO:0000305" key="8">
    <source>
    </source>
</evidence>
<feature type="chain" id="PRO_0000392759" description="Dermonecrotic toxin LhSicTox-alphaIA2biii">
    <location>
        <begin position="1" status="less than"/>
        <end position="273"/>
    </location>
</feature>
<feature type="active site" evidence="5">
    <location>
        <position position="5"/>
    </location>
</feature>
<feature type="active site" description="Nucleophile" evidence="5">
    <location>
        <position position="41"/>
    </location>
</feature>
<feature type="binding site" evidence="5">
    <location>
        <position position="25"/>
    </location>
    <ligand>
        <name>Mg(2+)</name>
        <dbReference type="ChEBI" id="CHEBI:18420"/>
    </ligand>
</feature>
<feature type="binding site" evidence="5">
    <location>
        <position position="27"/>
    </location>
    <ligand>
        <name>Mg(2+)</name>
        <dbReference type="ChEBI" id="CHEBI:18420"/>
    </ligand>
</feature>
<feature type="binding site" evidence="5">
    <location>
        <position position="85"/>
    </location>
    <ligand>
        <name>Mg(2+)</name>
        <dbReference type="ChEBI" id="CHEBI:18420"/>
    </ligand>
</feature>
<feature type="disulfide bond" evidence="3">
    <location>
        <begin position="45"/>
        <end position="51"/>
    </location>
</feature>
<feature type="disulfide bond" evidence="3">
    <location>
        <begin position="47"/>
        <end position="190"/>
    </location>
</feature>
<feature type="non-terminal residue">
    <location>
        <position position="1"/>
    </location>
</feature>
<keyword id="KW-0204">Cytolysis</keyword>
<keyword id="KW-1061">Dermonecrotic toxin</keyword>
<keyword id="KW-1015">Disulfide bond</keyword>
<keyword id="KW-0354">Hemolysis</keyword>
<keyword id="KW-0442">Lipid degradation</keyword>
<keyword id="KW-0443">Lipid metabolism</keyword>
<keyword id="KW-0456">Lyase</keyword>
<keyword id="KW-0460">Magnesium</keyword>
<keyword id="KW-0479">Metal-binding</keyword>
<keyword id="KW-0964">Secreted</keyword>
<keyword id="KW-0800">Toxin</keyword>